<protein>
    <recommendedName>
        <fullName>Cytochrome b-c1 complex subunit 7</fullName>
    </recommendedName>
    <alternativeName>
        <fullName>Complex III subunit 7</fullName>
    </alternativeName>
    <alternativeName>
        <fullName>Complex III subunit VII</fullName>
    </alternativeName>
    <alternativeName>
        <fullName>Ubiquinol-cytochrome c reductase complex 14 kDa protein</fullName>
    </alternativeName>
</protein>
<reference key="1">
    <citation type="journal article" date="1995" name="FEBS Lett.">
        <title>Identification of additional homologues of subunits VII and VIII of the ubiquinol-cytochrome c oxidoreductase enables definition of consensus sequences.</title>
        <authorList>
            <person name="Boumans H."/>
            <person name="Berden J.A."/>
            <person name="Grivell L.A."/>
        </authorList>
    </citation>
    <scope>NUCLEOTIDE SEQUENCE [GENOMIC DNA]</scope>
    <source>
        <strain>ATCC 22023 / CBS 621 / JCM 9624 / NBRC 10707 / NCYC 769 / NRRL Y-7586 / VKM Y-74</strain>
    </source>
</reference>
<feature type="chain" id="PRO_0000193536" description="Cytochrome b-c1 complex subunit 7">
    <location>
        <begin position="1"/>
        <end position="126"/>
    </location>
</feature>
<evidence type="ECO:0000250" key="1">
    <source>
        <dbReference type="UniProtKB" id="P00128"/>
    </source>
</evidence>
<evidence type="ECO:0000305" key="2"/>
<comment type="function">
    <text evidence="1">Component of the ubiquinol-cytochrome c oxidoreductase, a multisubunit transmembrane complex that is part of the mitochondrial electron transport chain which drives oxidative phosphorylation. The respiratory chain contains 3 multisubunit complexes succinate dehydrogenase (complex II, CII), ubiquinol-cytochrome c oxidoreductase (cytochrome b-c1 complex, complex III, CIII) and cytochrome c oxidase (complex IV, CIV), that cooperate to transfer electrons derived from NADH and succinate to molecular oxygen, creating an electrochemical gradient over the inner membrane that drives transmembrane transport and the ATP synthase. The cytochrome b-c1 complex catalyzes electron transfer from ubiquinol to cytochrome c, linking this redox reaction to translocation of protons across the mitochondrial inner membrane, with protons being carried across the membrane as hydrogens on the quinol. In the process called Q cycle, 2 protons are consumed from the matrix, 4 protons are released into the intermembrane space and 2 electrons are passed to cytochrome c.</text>
</comment>
<comment type="subunit">
    <text evidence="1">Component of the ubiquinol-cytochrome c oxidoreductase (cytochrome b-c1 complex, complex III, CIII), a multisubunit enzyme composed of 3 respiratory subunits cytochrome b, cytochrome c1 and Rieske protein, 2 core protein subunits, and additional low-molecular weight protein subunits. The complex exists as an obligatory dimer and forms supercomplexes (SCs) in the inner mitochondrial membrane with cytochrome c oxidase (complex IV, CIV).</text>
</comment>
<comment type="subcellular location">
    <subcellularLocation>
        <location evidence="1">Mitochondrion inner membrane</location>
        <topology evidence="1">Peripheral membrane protein</topology>
        <orientation evidence="1">Matrix side</orientation>
    </subcellularLocation>
</comment>
<comment type="similarity">
    <text evidence="2">Belongs to the UQCRB/QCR7 family.</text>
</comment>
<name>QCR7_CYBJA</name>
<dbReference type="EMBL" id="U20215">
    <property type="protein sequence ID" value="AAA86879.1"/>
    <property type="molecule type" value="Genomic_DNA"/>
</dbReference>
<dbReference type="PIR" id="S66280">
    <property type="entry name" value="S66280"/>
</dbReference>
<dbReference type="SMR" id="P46268"/>
<dbReference type="GO" id="GO:0005743">
    <property type="term" value="C:mitochondrial inner membrane"/>
    <property type="evidence" value="ECO:0007669"/>
    <property type="project" value="UniProtKB-SubCell"/>
</dbReference>
<dbReference type="GO" id="GO:0045275">
    <property type="term" value="C:respiratory chain complex III"/>
    <property type="evidence" value="ECO:0007669"/>
    <property type="project" value="InterPro"/>
</dbReference>
<dbReference type="GO" id="GO:0006122">
    <property type="term" value="P:mitochondrial electron transport, ubiquinol to cytochrome c"/>
    <property type="evidence" value="ECO:0007669"/>
    <property type="project" value="InterPro"/>
</dbReference>
<dbReference type="FunFam" id="1.10.1090.10:FF:000001">
    <property type="entry name" value="Cytochrome b-c1 complex subunit 7"/>
    <property type="match status" value="1"/>
</dbReference>
<dbReference type="Gene3D" id="1.10.1090.10">
    <property type="entry name" value="Cytochrome b-c1 complex subunit 7"/>
    <property type="match status" value="1"/>
</dbReference>
<dbReference type="InterPro" id="IPR003197">
    <property type="entry name" value="QCR7"/>
</dbReference>
<dbReference type="InterPro" id="IPR036544">
    <property type="entry name" value="QCR7_sf"/>
</dbReference>
<dbReference type="PANTHER" id="PTHR12022:SF0">
    <property type="entry name" value="CYTOCHROME B-C1 COMPLEX SUBUNIT 7"/>
    <property type="match status" value="1"/>
</dbReference>
<dbReference type="PANTHER" id="PTHR12022">
    <property type="entry name" value="UBIQUINOL-CYTOCHROME C REDUCTASE COMPLEX 14 KD PROTEIN"/>
    <property type="match status" value="1"/>
</dbReference>
<dbReference type="Pfam" id="PF02271">
    <property type="entry name" value="UCR_14kD"/>
    <property type="match status" value="1"/>
</dbReference>
<dbReference type="PIRSF" id="PIRSF000022">
    <property type="entry name" value="Bc1_14K"/>
    <property type="match status" value="1"/>
</dbReference>
<dbReference type="SUPFAM" id="SSF81524">
    <property type="entry name" value="14 kDa protein of cytochrome bc1 complex (Ubiquinol-cytochrome c reductase)"/>
    <property type="match status" value="1"/>
</dbReference>
<sequence length="126" mass="14129">MASHTSIVKAGDFILRTPVLRSIFVPAAKLFCAYSGYRQLGLKFDDLIHEENPTVQKALSRLPKDEIYARNFRMLTAAQCGITHHLLSADKALKPSEDTPYLLPYLLELEAEAAERVELDNVEVAK</sequence>
<proteinExistence type="inferred from homology"/>
<gene>
    <name type="primary">QCR7</name>
</gene>
<accession>P46268</accession>
<organism>
    <name type="scientific">Cyberlindnera jadinii</name>
    <name type="common">Torula yeast</name>
    <name type="synonym">Pichia jadinii</name>
    <dbReference type="NCBI Taxonomy" id="4903"/>
    <lineage>
        <taxon>Eukaryota</taxon>
        <taxon>Fungi</taxon>
        <taxon>Dikarya</taxon>
        <taxon>Ascomycota</taxon>
        <taxon>Saccharomycotina</taxon>
        <taxon>Saccharomycetes</taxon>
        <taxon>Phaffomycetales</taxon>
        <taxon>Phaffomycetaceae</taxon>
        <taxon>Cyberlindnera</taxon>
    </lineage>
</organism>
<keyword id="KW-0249">Electron transport</keyword>
<keyword id="KW-0472">Membrane</keyword>
<keyword id="KW-0496">Mitochondrion</keyword>
<keyword id="KW-0999">Mitochondrion inner membrane</keyword>
<keyword id="KW-0679">Respiratory chain</keyword>
<keyword id="KW-0813">Transport</keyword>